<name>EFP_PARD8</name>
<gene>
    <name evidence="1" type="primary">efp</name>
    <name type="ordered locus">BDI_2588</name>
</gene>
<sequence length="188" mass="21244">MINSQDIKKGTCIRLDGKLYFCVDFLHVKPGKGNTIMRTTLKDVVKGGQIERRFNIGEKLEDVRVERRPYQFTYTEGEHYHFMNQETFDDVIIDKNLINGVDFMKEGEIVDVVSDASTDTVLFADMPTKVQLKVTYTEPGIKGDTATNTLKPATVETGAEVRVPLFINEGEVIEINTTDGSYVGRIRE</sequence>
<organism>
    <name type="scientific">Parabacteroides distasonis (strain ATCC 8503 / DSM 20701 / CIP 104284 / JCM 5825 / NCTC 11152)</name>
    <dbReference type="NCBI Taxonomy" id="435591"/>
    <lineage>
        <taxon>Bacteria</taxon>
        <taxon>Pseudomonadati</taxon>
        <taxon>Bacteroidota</taxon>
        <taxon>Bacteroidia</taxon>
        <taxon>Bacteroidales</taxon>
        <taxon>Tannerellaceae</taxon>
        <taxon>Parabacteroides</taxon>
    </lineage>
</organism>
<reference key="1">
    <citation type="journal article" date="2007" name="PLoS Biol.">
        <title>Evolution of symbiotic bacteria in the distal human intestine.</title>
        <authorList>
            <person name="Xu J."/>
            <person name="Mahowald M.A."/>
            <person name="Ley R.E."/>
            <person name="Lozupone C.A."/>
            <person name="Hamady M."/>
            <person name="Martens E.C."/>
            <person name="Henrissat B."/>
            <person name="Coutinho P.M."/>
            <person name="Minx P."/>
            <person name="Latreille P."/>
            <person name="Cordum H."/>
            <person name="Van Brunt A."/>
            <person name="Kim K."/>
            <person name="Fulton R.S."/>
            <person name="Fulton L.A."/>
            <person name="Clifton S.W."/>
            <person name="Wilson R.K."/>
            <person name="Knight R.D."/>
            <person name="Gordon J.I."/>
        </authorList>
    </citation>
    <scope>NUCLEOTIDE SEQUENCE [LARGE SCALE GENOMIC DNA]</scope>
    <source>
        <strain>ATCC 8503 / DSM 20701 / CIP 104284 / JCM 5825 / NCTC 11152</strain>
    </source>
</reference>
<comment type="function">
    <text evidence="1">Involved in peptide bond synthesis. Stimulates efficient translation and peptide-bond synthesis on native or reconstituted 70S ribosomes in vitro. Probably functions indirectly by altering the affinity of the ribosome for aminoacyl-tRNA, thus increasing their reactivity as acceptors for peptidyl transferase.</text>
</comment>
<comment type="pathway">
    <text evidence="1">Protein biosynthesis; polypeptide chain elongation.</text>
</comment>
<comment type="subcellular location">
    <subcellularLocation>
        <location evidence="1">Cytoplasm</location>
    </subcellularLocation>
</comment>
<comment type="similarity">
    <text evidence="1">Belongs to the elongation factor P family.</text>
</comment>
<feature type="chain" id="PRO_1000010799" description="Elongation factor P">
    <location>
        <begin position="1"/>
        <end position="188"/>
    </location>
</feature>
<protein>
    <recommendedName>
        <fullName evidence="1">Elongation factor P</fullName>
        <shortName evidence="1">EF-P</shortName>
    </recommendedName>
</protein>
<dbReference type="EMBL" id="CP000140">
    <property type="protein sequence ID" value="ABR44307.1"/>
    <property type="molecule type" value="Genomic_DNA"/>
</dbReference>
<dbReference type="RefSeq" id="WP_005861200.1">
    <property type="nucleotide sequence ID" value="NZ_LR215978.1"/>
</dbReference>
<dbReference type="SMR" id="A6LF43"/>
<dbReference type="STRING" id="435591.BDI_2588"/>
<dbReference type="PaxDb" id="435591-BDI_2588"/>
<dbReference type="KEGG" id="pdi:BDI_2588"/>
<dbReference type="eggNOG" id="COG0231">
    <property type="taxonomic scope" value="Bacteria"/>
</dbReference>
<dbReference type="HOGENOM" id="CLU_074944_0_1_10"/>
<dbReference type="BioCyc" id="PDIS435591:G1G5A-2658-MONOMER"/>
<dbReference type="UniPathway" id="UPA00345"/>
<dbReference type="Proteomes" id="UP000000566">
    <property type="component" value="Chromosome"/>
</dbReference>
<dbReference type="GO" id="GO:0005737">
    <property type="term" value="C:cytoplasm"/>
    <property type="evidence" value="ECO:0007669"/>
    <property type="project" value="UniProtKB-SubCell"/>
</dbReference>
<dbReference type="GO" id="GO:0003746">
    <property type="term" value="F:translation elongation factor activity"/>
    <property type="evidence" value="ECO:0007669"/>
    <property type="project" value="UniProtKB-UniRule"/>
</dbReference>
<dbReference type="GO" id="GO:0043043">
    <property type="term" value="P:peptide biosynthetic process"/>
    <property type="evidence" value="ECO:0007669"/>
    <property type="project" value="InterPro"/>
</dbReference>
<dbReference type="CDD" id="cd05794">
    <property type="entry name" value="S1_EF-P_repeat_2"/>
    <property type="match status" value="1"/>
</dbReference>
<dbReference type="FunFam" id="2.30.30.30:FF:000003">
    <property type="entry name" value="Elongation factor P"/>
    <property type="match status" value="1"/>
</dbReference>
<dbReference type="FunFam" id="2.40.50.140:FF:000004">
    <property type="entry name" value="Elongation factor P"/>
    <property type="match status" value="1"/>
</dbReference>
<dbReference type="Gene3D" id="2.30.30.30">
    <property type="match status" value="1"/>
</dbReference>
<dbReference type="Gene3D" id="2.40.50.140">
    <property type="entry name" value="Nucleic acid-binding proteins"/>
    <property type="match status" value="2"/>
</dbReference>
<dbReference type="HAMAP" id="MF_00141">
    <property type="entry name" value="EF_P"/>
    <property type="match status" value="1"/>
</dbReference>
<dbReference type="InterPro" id="IPR015365">
    <property type="entry name" value="Elong-fact-P_C"/>
</dbReference>
<dbReference type="InterPro" id="IPR012340">
    <property type="entry name" value="NA-bd_OB-fold"/>
</dbReference>
<dbReference type="InterPro" id="IPR014722">
    <property type="entry name" value="Rib_uL2_dom2"/>
</dbReference>
<dbReference type="InterPro" id="IPR020599">
    <property type="entry name" value="Transl_elong_fac_P/YeiP"/>
</dbReference>
<dbReference type="InterPro" id="IPR013185">
    <property type="entry name" value="Transl_elong_KOW-like"/>
</dbReference>
<dbReference type="InterPro" id="IPR001059">
    <property type="entry name" value="Transl_elong_P/YeiP_cen"/>
</dbReference>
<dbReference type="InterPro" id="IPR013852">
    <property type="entry name" value="Transl_elong_P/YeiP_CS"/>
</dbReference>
<dbReference type="InterPro" id="IPR011768">
    <property type="entry name" value="Transl_elongation_fac_P"/>
</dbReference>
<dbReference type="InterPro" id="IPR008991">
    <property type="entry name" value="Translation_prot_SH3-like_sf"/>
</dbReference>
<dbReference type="NCBIfam" id="TIGR00038">
    <property type="entry name" value="efp"/>
    <property type="match status" value="1"/>
</dbReference>
<dbReference type="NCBIfam" id="NF001810">
    <property type="entry name" value="PRK00529.1"/>
    <property type="match status" value="1"/>
</dbReference>
<dbReference type="PANTHER" id="PTHR30053">
    <property type="entry name" value="ELONGATION FACTOR P"/>
    <property type="match status" value="1"/>
</dbReference>
<dbReference type="PANTHER" id="PTHR30053:SF12">
    <property type="entry name" value="ELONGATION FACTOR P (EF-P) FAMILY PROTEIN"/>
    <property type="match status" value="1"/>
</dbReference>
<dbReference type="Pfam" id="PF01132">
    <property type="entry name" value="EFP"/>
    <property type="match status" value="1"/>
</dbReference>
<dbReference type="Pfam" id="PF08207">
    <property type="entry name" value="EFP_N"/>
    <property type="match status" value="1"/>
</dbReference>
<dbReference type="Pfam" id="PF09285">
    <property type="entry name" value="Elong-fact-P_C"/>
    <property type="match status" value="1"/>
</dbReference>
<dbReference type="PIRSF" id="PIRSF005901">
    <property type="entry name" value="EF-P"/>
    <property type="match status" value="1"/>
</dbReference>
<dbReference type="SMART" id="SM01185">
    <property type="entry name" value="EFP"/>
    <property type="match status" value="1"/>
</dbReference>
<dbReference type="SMART" id="SM00841">
    <property type="entry name" value="Elong-fact-P_C"/>
    <property type="match status" value="1"/>
</dbReference>
<dbReference type="SUPFAM" id="SSF50249">
    <property type="entry name" value="Nucleic acid-binding proteins"/>
    <property type="match status" value="2"/>
</dbReference>
<dbReference type="SUPFAM" id="SSF50104">
    <property type="entry name" value="Translation proteins SH3-like domain"/>
    <property type="match status" value="1"/>
</dbReference>
<dbReference type="PROSITE" id="PS01275">
    <property type="entry name" value="EFP"/>
    <property type="match status" value="1"/>
</dbReference>
<keyword id="KW-0963">Cytoplasm</keyword>
<keyword id="KW-0251">Elongation factor</keyword>
<keyword id="KW-0648">Protein biosynthesis</keyword>
<keyword id="KW-1185">Reference proteome</keyword>
<proteinExistence type="inferred from homology"/>
<evidence type="ECO:0000255" key="1">
    <source>
        <dbReference type="HAMAP-Rule" id="MF_00141"/>
    </source>
</evidence>
<accession>A6LF43</accession>